<comment type="function">
    <text evidence="1">Catalyzes the NADPH-dependent rearrangement and reduction of 1-deoxy-D-xylulose-5-phosphate (DXP) to 2-C-methyl-D-erythritol 4-phosphate (MEP).</text>
</comment>
<comment type="catalytic activity">
    <reaction evidence="1">
        <text>2-C-methyl-D-erythritol 4-phosphate + NADP(+) = 1-deoxy-D-xylulose 5-phosphate + NADPH + H(+)</text>
        <dbReference type="Rhea" id="RHEA:13717"/>
        <dbReference type="ChEBI" id="CHEBI:15378"/>
        <dbReference type="ChEBI" id="CHEBI:57783"/>
        <dbReference type="ChEBI" id="CHEBI:57792"/>
        <dbReference type="ChEBI" id="CHEBI:58262"/>
        <dbReference type="ChEBI" id="CHEBI:58349"/>
        <dbReference type="EC" id="1.1.1.267"/>
    </reaction>
    <physiologicalReaction direction="right-to-left" evidence="1">
        <dbReference type="Rhea" id="RHEA:13719"/>
    </physiologicalReaction>
</comment>
<comment type="cofactor">
    <cofactor evidence="1">
        <name>Mg(2+)</name>
        <dbReference type="ChEBI" id="CHEBI:18420"/>
    </cofactor>
    <cofactor evidence="1">
        <name>Mn(2+)</name>
        <dbReference type="ChEBI" id="CHEBI:29035"/>
    </cofactor>
</comment>
<comment type="pathway">
    <text evidence="1">Isoprenoid biosynthesis; isopentenyl diphosphate biosynthesis via DXP pathway; isopentenyl diphosphate from 1-deoxy-D-xylulose 5-phosphate: step 1/6.</text>
</comment>
<comment type="similarity">
    <text evidence="1">Belongs to the DXR family.</text>
</comment>
<evidence type="ECO:0000255" key="1">
    <source>
        <dbReference type="HAMAP-Rule" id="MF_00183"/>
    </source>
</evidence>
<proteinExistence type="inferred from homology"/>
<keyword id="KW-0414">Isoprene biosynthesis</keyword>
<keyword id="KW-0464">Manganese</keyword>
<keyword id="KW-0479">Metal-binding</keyword>
<keyword id="KW-0521">NADP</keyword>
<keyword id="KW-0560">Oxidoreductase</keyword>
<keyword id="KW-1185">Reference proteome</keyword>
<reference key="1">
    <citation type="journal article" date="2006" name="Nat. Biotechnol.">
        <title>The genome and transcriptomes of the anti-tumor agent Clostridium novyi-NT.</title>
        <authorList>
            <person name="Bettegowda C."/>
            <person name="Huang X."/>
            <person name="Lin J."/>
            <person name="Cheong I."/>
            <person name="Kohli M."/>
            <person name="Szabo S.A."/>
            <person name="Zhang X."/>
            <person name="Diaz L.A. Jr."/>
            <person name="Velculescu V.E."/>
            <person name="Parmigiani G."/>
            <person name="Kinzler K.W."/>
            <person name="Vogelstein B."/>
            <person name="Zhou S."/>
        </authorList>
    </citation>
    <scope>NUCLEOTIDE SEQUENCE [LARGE SCALE GENOMIC DNA]</scope>
    <source>
        <strain>NT</strain>
    </source>
</reference>
<dbReference type="EC" id="1.1.1.267" evidence="1"/>
<dbReference type="EMBL" id="CP000382">
    <property type="protein sequence ID" value="ABK61080.1"/>
    <property type="molecule type" value="Genomic_DNA"/>
</dbReference>
<dbReference type="RefSeq" id="WP_011722216.1">
    <property type="nucleotide sequence ID" value="NC_008593.1"/>
</dbReference>
<dbReference type="SMR" id="A0Q0R4"/>
<dbReference type="STRING" id="386415.NT01CX_2143"/>
<dbReference type="KEGG" id="cno:NT01CX_2143"/>
<dbReference type="eggNOG" id="COG0743">
    <property type="taxonomic scope" value="Bacteria"/>
</dbReference>
<dbReference type="HOGENOM" id="CLU_035714_4_0_9"/>
<dbReference type="UniPathway" id="UPA00056">
    <property type="reaction ID" value="UER00092"/>
</dbReference>
<dbReference type="Proteomes" id="UP000008220">
    <property type="component" value="Chromosome"/>
</dbReference>
<dbReference type="GO" id="GO:0030604">
    <property type="term" value="F:1-deoxy-D-xylulose-5-phosphate reductoisomerase activity"/>
    <property type="evidence" value="ECO:0007669"/>
    <property type="project" value="UniProtKB-UniRule"/>
</dbReference>
<dbReference type="GO" id="GO:0030145">
    <property type="term" value="F:manganese ion binding"/>
    <property type="evidence" value="ECO:0007669"/>
    <property type="project" value="TreeGrafter"/>
</dbReference>
<dbReference type="GO" id="GO:0070402">
    <property type="term" value="F:NADPH binding"/>
    <property type="evidence" value="ECO:0007669"/>
    <property type="project" value="InterPro"/>
</dbReference>
<dbReference type="GO" id="GO:0051484">
    <property type="term" value="P:isopentenyl diphosphate biosynthetic process, methylerythritol 4-phosphate pathway involved in terpenoid biosynthetic process"/>
    <property type="evidence" value="ECO:0007669"/>
    <property type="project" value="TreeGrafter"/>
</dbReference>
<dbReference type="FunFam" id="3.40.50.720:FF:000045">
    <property type="entry name" value="1-deoxy-D-xylulose 5-phosphate reductoisomerase"/>
    <property type="match status" value="1"/>
</dbReference>
<dbReference type="Gene3D" id="1.10.1740.10">
    <property type="match status" value="1"/>
</dbReference>
<dbReference type="Gene3D" id="3.40.50.720">
    <property type="entry name" value="NAD(P)-binding Rossmann-like Domain"/>
    <property type="match status" value="1"/>
</dbReference>
<dbReference type="HAMAP" id="MF_00183">
    <property type="entry name" value="DXP_reductoisom"/>
    <property type="match status" value="1"/>
</dbReference>
<dbReference type="InterPro" id="IPR003821">
    <property type="entry name" value="DXP_reductoisomerase"/>
</dbReference>
<dbReference type="InterPro" id="IPR013644">
    <property type="entry name" value="DXP_reductoisomerase_C"/>
</dbReference>
<dbReference type="InterPro" id="IPR013512">
    <property type="entry name" value="DXP_reductoisomerase_N"/>
</dbReference>
<dbReference type="InterPro" id="IPR026877">
    <property type="entry name" value="DXPR_C"/>
</dbReference>
<dbReference type="InterPro" id="IPR036169">
    <property type="entry name" value="DXPR_C_sf"/>
</dbReference>
<dbReference type="InterPro" id="IPR036291">
    <property type="entry name" value="NAD(P)-bd_dom_sf"/>
</dbReference>
<dbReference type="NCBIfam" id="TIGR00243">
    <property type="entry name" value="Dxr"/>
    <property type="match status" value="1"/>
</dbReference>
<dbReference type="NCBIfam" id="NF009114">
    <property type="entry name" value="PRK12464.1"/>
    <property type="match status" value="1"/>
</dbReference>
<dbReference type="PANTHER" id="PTHR30525">
    <property type="entry name" value="1-DEOXY-D-XYLULOSE 5-PHOSPHATE REDUCTOISOMERASE"/>
    <property type="match status" value="1"/>
</dbReference>
<dbReference type="PANTHER" id="PTHR30525:SF0">
    <property type="entry name" value="1-DEOXY-D-XYLULOSE 5-PHOSPHATE REDUCTOISOMERASE, CHLOROPLASTIC"/>
    <property type="match status" value="1"/>
</dbReference>
<dbReference type="Pfam" id="PF08436">
    <property type="entry name" value="DXP_redisom_C"/>
    <property type="match status" value="1"/>
</dbReference>
<dbReference type="Pfam" id="PF02670">
    <property type="entry name" value="DXP_reductoisom"/>
    <property type="match status" value="1"/>
</dbReference>
<dbReference type="Pfam" id="PF13288">
    <property type="entry name" value="DXPR_C"/>
    <property type="match status" value="1"/>
</dbReference>
<dbReference type="PIRSF" id="PIRSF006205">
    <property type="entry name" value="Dxp_reductismrs"/>
    <property type="match status" value="1"/>
</dbReference>
<dbReference type="SUPFAM" id="SSF69055">
    <property type="entry name" value="1-deoxy-D-xylulose-5-phosphate reductoisomerase, C-terminal domain"/>
    <property type="match status" value="1"/>
</dbReference>
<dbReference type="SUPFAM" id="SSF55347">
    <property type="entry name" value="Glyceraldehyde-3-phosphate dehydrogenase-like, C-terminal domain"/>
    <property type="match status" value="1"/>
</dbReference>
<dbReference type="SUPFAM" id="SSF51735">
    <property type="entry name" value="NAD(P)-binding Rossmann-fold domains"/>
    <property type="match status" value="1"/>
</dbReference>
<protein>
    <recommendedName>
        <fullName evidence="1">1-deoxy-D-xylulose 5-phosphate reductoisomerase</fullName>
        <shortName evidence="1">DXP reductoisomerase</shortName>
        <ecNumber evidence="1">1.1.1.267</ecNumber>
    </recommendedName>
    <alternativeName>
        <fullName evidence="1">1-deoxyxylulose-5-phosphate reductoisomerase</fullName>
    </alternativeName>
    <alternativeName>
        <fullName evidence="1">2-C-methyl-D-erythritol 4-phosphate synthase</fullName>
    </alternativeName>
</protein>
<name>DXR_CLONN</name>
<gene>
    <name evidence="1" type="primary">dxr</name>
    <name type="ordered locus">NT01CX_2143</name>
</gene>
<sequence length="385" mass="43087">MKNICILGATGSIGTQTLDVIEKESNKFKLVAFSANKSYEKIITIIEKFNPVYGAINDKETFLKVKDHCNINNIKINLLYGMDGLIKISTLEEVELVVTSIVGMIGLVPTLEAINAGKDIALANKETLVTGGELVMKAAKQNNVKILPVDSEHGAIFQCLQGNSYKDIETIYVTASGGPFRQSKLEELINITPEQALKHPKWNMGKKISIDSSTMINKGLEVIEAHWLFNVGYDKIKVLVHPQSIVHSMVEYIDGSIIAQLASTDMRLPIQYALNYPVRNKKVVEKLDVYNMGNLTFEKPDFEKFRGLKLAYEAGKLGGIMPTIFNASNEVAVNMFLNNHIKYLEIVDIVEECMNKFENKSIKDVEDILNAEAKVRSFIKNKYNF</sequence>
<organism>
    <name type="scientific">Clostridium novyi (strain NT)</name>
    <dbReference type="NCBI Taxonomy" id="386415"/>
    <lineage>
        <taxon>Bacteria</taxon>
        <taxon>Bacillati</taxon>
        <taxon>Bacillota</taxon>
        <taxon>Clostridia</taxon>
        <taxon>Eubacteriales</taxon>
        <taxon>Clostridiaceae</taxon>
        <taxon>Clostridium</taxon>
    </lineage>
</organism>
<accession>A0Q0R4</accession>
<feature type="chain" id="PRO_1000020250" description="1-deoxy-D-xylulose 5-phosphate reductoisomerase">
    <location>
        <begin position="1"/>
        <end position="385"/>
    </location>
</feature>
<feature type="binding site" evidence="1">
    <location>
        <position position="10"/>
    </location>
    <ligand>
        <name>NADPH</name>
        <dbReference type="ChEBI" id="CHEBI:57783"/>
    </ligand>
</feature>
<feature type="binding site" evidence="1">
    <location>
        <position position="11"/>
    </location>
    <ligand>
        <name>NADPH</name>
        <dbReference type="ChEBI" id="CHEBI:57783"/>
    </ligand>
</feature>
<feature type="binding site" evidence="1">
    <location>
        <position position="12"/>
    </location>
    <ligand>
        <name>NADPH</name>
        <dbReference type="ChEBI" id="CHEBI:57783"/>
    </ligand>
</feature>
<feature type="binding site" evidence="1">
    <location>
        <position position="13"/>
    </location>
    <ligand>
        <name>NADPH</name>
        <dbReference type="ChEBI" id="CHEBI:57783"/>
    </ligand>
</feature>
<feature type="binding site" evidence="1">
    <location>
        <position position="37"/>
    </location>
    <ligand>
        <name>NADPH</name>
        <dbReference type="ChEBI" id="CHEBI:57783"/>
    </ligand>
</feature>
<feature type="binding site" evidence="1">
    <location>
        <position position="124"/>
    </location>
    <ligand>
        <name>NADPH</name>
        <dbReference type="ChEBI" id="CHEBI:57783"/>
    </ligand>
</feature>
<feature type="binding site" evidence="1">
    <location>
        <position position="125"/>
    </location>
    <ligand>
        <name>1-deoxy-D-xylulose 5-phosphate</name>
        <dbReference type="ChEBI" id="CHEBI:57792"/>
    </ligand>
</feature>
<feature type="binding site" evidence="1">
    <location>
        <position position="126"/>
    </location>
    <ligand>
        <name>NADPH</name>
        <dbReference type="ChEBI" id="CHEBI:57783"/>
    </ligand>
</feature>
<feature type="binding site" evidence="1">
    <location>
        <position position="150"/>
    </location>
    <ligand>
        <name>Mn(2+)</name>
        <dbReference type="ChEBI" id="CHEBI:29035"/>
    </ligand>
</feature>
<feature type="binding site" evidence="1">
    <location>
        <position position="151"/>
    </location>
    <ligand>
        <name>1-deoxy-D-xylulose 5-phosphate</name>
        <dbReference type="ChEBI" id="CHEBI:57792"/>
    </ligand>
</feature>
<feature type="binding site" evidence="1">
    <location>
        <position position="152"/>
    </location>
    <ligand>
        <name>1-deoxy-D-xylulose 5-phosphate</name>
        <dbReference type="ChEBI" id="CHEBI:57792"/>
    </ligand>
</feature>
<feature type="binding site" evidence="1">
    <location>
        <position position="152"/>
    </location>
    <ligand>
        <name>Mn(2+)</name>
        <dbReference type="ChEBI" id="CHEBI:29035"/>
    </ligand>
</feature>
<feature type="binding site" evidence="1">
    <location>
        <position position="176"/>
    </location>
    <ligand>
        <name>1-deoxy-D-xylulose 5-phosphate</name>
        <dbReference type="ChEBI" id="CHEBI:57792"/>
    </ligand>
</feature>
<feature type="binding site" evidence="1">
    <location>
        <position position="199"/>
    </location>
    <ligand>
        <name>1-deoxy-D-xylulose 5-phosphate</name>
        <dbReference type="ChEBI" id="CHEBI:57792"/>
    </ligand>
</feature>
<feature type="binding site" evidence="1">
    <location>
        <position position="205"/>
    </location>
    <ligand>
        <name>NADPH</name>
        <dbReference type="ChEBI" id="CHEBI:57783"/>
    </ligand>
</feature>
<feature type="binding site" evidence="1">
    <location>
        <position position="212"/>
    </location>
    <ligand>
        <name>1-deoxy-D-xylulose 5-phosphate</name>
        <dbReference type="ChEBI" id="CHEBI:57792"/>
    </ligand>
</feature>
<feature type="binding site" evidence="1">
    <location>
        <position position="217"/>
    </location>
    <ligand>
        <name>1-deoxy-D-xylulose 5-phosphate</name>
        <dbReference type="ChEBI" id="CHEBI:57792"/>
    </ligand>
</feature>
<feature type="binding site" evidence="1">
    <location>
        <position position="218"/>
    </location>
    <ligand>
        <name>1-deoxy-D-xylulose 5-phosphate</name>
        <dbReference type="ChEBI" id="CHEBI:57792"/>
    </ligand>
</feature>
<feature type="binding site" evidence="1">
    <location>
        <position position="221"/>
    </location>
    <ligand>
        <name>1-deoxy-D-xylulose 5-phosphate</name>
        <dbReference type="ChEBI" id="CHEBI:57792"/>
    </ligand>
</feature>
<feature type="binding site" evidence="1">
    <location>
        <position position="221"/>
    </location>
    <ligand>
        <name>Mn(2+)</name>
        <dbReference type="ChEBI" id="CHEBI:29035"/>
    </ligand>
</feature>